<evidence type="ECO:0000250" key="1">
    <source>
        <dbReference type="UniProtKB" id="Q8WVK7"/>
    </source>
</evidence>
<evidence type="ECO:0000250" key="2">
    <source>
        <dbReference type="UniProtKB" id="Q9CR46"/>
    </source>
</evidence>
<evidence type="ECO:0000305" key="3"/>
<keyword id="KW-0131">Cell cycle</keyword>
<keyword id="KW-0132">Cell division</keyword>
<keyword id="KW-0137">Centromere</keyword>
<keyword id="KW-0158">Chromosome</keyword>
<keyword id="KW-0963">Cytoplasm</keyword>
<keyword id="KW-0206">Cytoskeleton</keyword>
<keyword id="KW-0995">Kinetochore</keyword>
<keyword id="KW-0493">Microtubule</keyword>
<keyword id="KW-0498">Mitosis</keyword>
<keyword id="KW-1185">Reference proteome</keyword>
<name>SKA2_RAT</name>
<proteinExistence type="evidence at transcript level"/>
<accession>Q5I0J4</accession>
<accession>A6HHS9</accession>
<reference key="1">
    <citation type="submission" date="2005-07" db="EMBL/GenBank/DDBJ databases">
        <authorList>
            <person name="Mural R.J."/>
            <person name="Adams M.D."/>
            <person name="Myers E.W."/>
            <person name="Smith H.O."/>
            <person name="Venter J.C."/>
        </authorList>
    </citation>
    <scope>NUCLEOTIDE SEQUENCE [LARGE SCALE GENOMIC DNA]</scope>
</reference>
<reference key="2">
    <citation type="journal article" date="2004" name="Genome Res.">
        <title>The status, quality, and expansion of the NIH full-length cDNA project: the Mammalian Gene Collection (MGC).</title>
        <authorList>
            <consortium name="The MGC Project Team"/>
        </authorList>
    </citation>
    <scope>NUCLEOTIDE SEQUENCE [LARGE SCALE MRNA]</scope>
    <source>
        <tissue>Spleen</tissue>
    </source>
</reference>
<organism>
    <name type="scientific">Rattus norvegicus</name>
    <name type="common">Rat</name>
    <dbReference type="NCBI Taxonomy" id="10116"/>
    <lineage>
        <taxon>Eukaryota</taxon>
        <taxon>Metazoa</taxon>
        <taxon>Chordata</taxon>
        <taxon>Craniata</taxon>
        <taxon>Vertebrata</taxon>
        <taxon>Euteleostomi</taxon>
        <taxon>Mammalia</taxon>
        <taxon>Eutheria</taxon>
        <taxon>Euarchontoglires</taxon>
        <taxon>Glires</taxon>
        <taxon>Rodentia</taxon>
        <taxon>Myomorpha</taxon>
        <taxon>Muroidea</taxon>
        <taxon>Muridae</taxon>
        <taxon>Murinae</taxon>
        <taxon>Rattus</taxon>
    </lineage>
</organism>
<gene>
    <name type="primary">Ska2</name>
    <name type="synonym">Fam33a</name>
</gene>
<protein>
    <recommendedName>
        <fullName evidence="3">SKA complex subunit 2</fullName>
    </recommendedName>
    <alternativeName>
        <fullName>Protein FAM33A</fullName>
    </alternativeName>
    <alternativeName>
        <fullName>Spindle and kinetochore-associated protein 2</fullName>
    </alternativeName>
</protein>
<sequence>MEAEVDKLELMFQKADSDLDYLQYRLEYEVKINHPHSAGEKNAVAILKELSAIKSRYQALCARFKTVSVEQKETKSCICAILNKTMTMLQELQKQTNLELTLLTEEEKAVTERLKSHVPDVENGILQRNFDGEKISSKEIQRGV</sequence>
<feature type="chain" id="PRO_0000273162" description="SKA complex subunit 2">
    <location>
        <begin position="1"/>
        <end position="144"/>
    </location>
</feature>
<comment type="function">
    <text evidence="1 2">Component of the SKA complex, a microtubule plus end-binding complex of the outer kinetochore that stabilizes spindle microtubule-kinetochore attachments, promotes alignment of chromosomes at the mitotic spindle equator (chromosome congression) and assists suppression of the spindle assembly checkpoint. Kinetochores, consisting of a centromere-associated inner segment and a microtubule-contacting outer segment, play a crucial role in chromosome segregation by mediating the physical connection between centromeric DNA and spindle microtubules. The outer kinetochore is made up of the ten-subunit KMN network complex, comprising the MIS12, NDC80 and KNL1 complexes, and auxiliary microtubule-associated components such as the SKA complex; together they connect the outer kinetochore with the inner kinetochore, bind microtubules, and mediate interactions with mitotic checkpoint proteins that delay anaphase until chromosomes are bioriented on the spindle. The SKA complex is loaded onto bioriented kinetochores and it facilitates chromosome congression by stabilizing microtubules together with MAPRE1, and end-on attachment of the NDC80 complex to depolymerizing spindle microtubules, thereby assisting the poleward-moving kinetochore in withstanding microtubule pulling forces. The complex associates with dynamic microtubule plus-ends and can track both depolymerizing and elongating microtubules. The complex recruits protein phosphatase 1 (PP1) to the kinetochore in prometaphase and metaphase, to oppose spindle assembly checkpoint signaling and promote the onset of anaphase. Binds directly to microtubules; but with a much lower affinity than SKA1 (By similarity). During meiosis the SKA complex stabilizes the meiotic spindle and is required for its migration to the cortex (By similarity).</text>
</comment>
<comment type="subunit">
    <text evidence="1">Component of the SKA complex, composed of SKA1, SKA2 and SKA3. The SKA complex is a homodimer organized around a central W-shaped coiled-coil structure, formed by the interacting domains of SKA1, SKA2, and SKA3, each end of the 'W' is extended further by the C-terminal microtubule-binding domains of SKA1 and SKA3; the complex forms extended structures on microtubules. May interact with NR3C1; the relevance of such interaction remains unclear in vivo. Interacts with the MIS12 complex subunit DSN1. Interacts with the NDC80 complex; the interaction is required to establish kinetochore-microtubule end-on attachments.</text>
</comment>
<comment type="subcellular location">
    <subcellularLocation>
        <location evidence="1">Cytoplasm</location>
        <location evidence="1">Cytoskeleton</location>
        <location evidence="1">Spindle</location>
    </subcellularLocation>
    <subcellularLocation>
        <location evidence="1">Chromosome</location>
        <location evidence="1">Centromere</location>
        <location evidence="1">Kinetochore</location>
    </subcellularLocation>
    <subcellularLocation>
        <location evidence="1">Cytoplasm</location>
        <location evidence="1">Cytoskeleton</location>
        <location evidence="1">Microtubule organizing center</location>
        <location evidence="1">Centrosome</location>
    </subcellularLocation>
    <text evidence="1 2">Localizes to bioriented kinetochores and spindle microtubules during prometaphase and metaphase in a NDC80 complex-dependent manner (By similarity). The SKA complex begins to concentrate at kinetochores before microtubule attachment but reaches maximum levels on bioriented metaphase chromosomes (By similarity). Localizes both to microtubule plus-ends and along the length of microtubules (By similarity). The localization of the SKA complex to kinetochores is positively regulated by protein serine/threonine kinase CDK1 (By similarity). The localization of the SKA complex to kinetochores is negatively regulated by protein serine/threonine kinase AURKB, and this action is opposed directly or indirectly by the PP1 and PP2A protein phosphatase complexes (By similarity). Localizes at the centrosome during interphase and prophase (By similarity). Localizes to the meiotic spindle, but not to kinetochores, from the stage of germinal vesicle breakdown (GVBD) to meiosis II (MII) (By similarity).</text>
</comment>
<comment type="similarity">
    <text evidence="3">Belongs to the SKA2 family.</text>
</comment>
<dbReference type="EMBL" id="BC088264">
    <property type="protein sequence ID" value="AAH88264.1"/>
    <property type="molecule type" value="mRNA"/>
</dbReference>
<dbReference type="EMBL" id="CH473948">
    <property type="protein sequence ID" value="EDM05584.1"/>
    <property type="molecule type" value="Genomic_DNA"/>
</dbReference>
<dbReference type="RefSeq" id="NP_001009624.1">
    <property type="nucleotide sequence ID" value="NM_001009624.1"/>
</dbReference>
<dbReference type="SMR" id="Q5I0J4"/>
<dbReference type="FunCoup" id="Q5I0J4">
    <property type="interactions" value="1925"/>
</dbReference>
<dbReference type="STRING" id="10116.ENSRNOP00000033780"/>
<dbReference type="PhosphoSitePlus" id="Q5I0J4"/>
<dbReference type="PaxDb" id="10116-ENSRNOP00000033780"/>
<dbReference type="Ensembl" id="ENSRNOT00000036098.4">
    <property type="protein sequence ID" value="ENSRNOP00000033780.3"/>
    <property type="gene ID" value="ENSRNOG00000025981.4"/>
</dbReference>
<dbReference type="Ensembl" id="ENSRNOT00055052834">
    <property type="protein sequence ID" value="ENSRNOP00055043671"/>
    <property type="gene ID" value="ENSRNOG00055030457"/>
</dbReference>
<dbReference type="Ensembl" id="ENSRNOT00060054261">
    <property type="protein sequence ID" value="ENSRNOP00060044973"/>
    <property type="gene ID" value="ENSRNOG00060031277"/>
</dbReference>
<dbReference type="Ensembl" id="ENSRNOT00065031480">
    <property type="protein sequence ID" value="ENSRNOP00065025077"/>
    <property type="gene ID" value="ENSRNOG00065018757"/>
</dbReference>
<dbReference type="GeneID" id="287598"/>
<dbReference type="KEGG" id="rno:287598"/>
<dbReference type="AGR" id="RGD:1307084"/>
<dbReference type="CTD" id="348235"/>
<dbReference type="RGD" id="1307084">
    <property type="gene designation" value="Ska2"/>
</dbReference>
<dbReference type="eggNOG" id="ENOG502S6SM">
    <property type="taxonomic scope" value="Eukaryota"/>
</dbReference>
<dbReference type="GeneTree" id="ENSGT00390000009588"/>
<dbReference type="HOGENOM" id="CLU_143881_0_0_1"/>
<dbReference type="InParanoid" id="Q5I0J4"/>
<dbReference type="OrthoDB" id="193920at2759"/>
<dbReference type="PhylomeDB" id="Q5I0J4"/>
<dbReference type="TreeFam" id="TF332958"/>
<dbReference type="Reactome" id="R-RNO-141444">
    <property type="pathway name" value="Amplification of signal from unattached kinetochores via a MAD2 inhibitory signal"/>
</dbReference>
<dbReference type="Reactome" id="R-RNO-2467813">
    <property type="pathway name" value="Separation of Sister Chromatids"/>
</dbReference>
<dbReference type="Reactome" id="R-RNO-2500257">
    <property type="pathway name" value="Resolution of Sister Chromatid Cohesion"/>
</dbReference>
<dbReference type="Reactome" id="R-RNO-5663220">
    <property type="pathway name" value="RHO GTPases Activate Formins"/>
</dbReference>
<dbReference type="Reactome" id="R-RNO-68877">
    <property type="pathway name" value="Mitotic Prometaphase"/>
</dbReference>
<dbReference type="Reactome" id="R-RNO-9648025">
    <property type="pathway name" value="EML4 and NUDC in mitotic spindle formation"/>
</dbReference>
<dbReference type="PRO" id="PR:Q5I0J4"/>
<dbReference type="Proteomes" id="UP000002494">
    <property type="component" value="Chromosome 10"/>
</dbReference>
<dbReference type="Proteomes" id="UP000234681">
    <property type="component" value="Chromosome 10"/>
</dbReference>
<dbReference type="Bgee" id="ENSRNOG00000025981">
    <property type="expression patterns" value="Expressed in thymus and 19 other cell types or tissues"/>
</dbReference>
<dbReference type="GO" id="GO:0005813">
    <property type="term" value="C:centrosome"/>
    <property type="evidence" value="ECO:0007669"/>
    <property type="project" value="UniProtKB-SubCell"/>
</dbReference>
<dbReference type="GO" id="GO:0005737">
    <property type="term" value="C:cytoplasm"/>
    <property type="evidence" value="ECO:0007669"/>
    <property type="project" value="UniProtKB-KW"/>
</dbReference>
<dbReference type="GO" id="GO:0000776">
    <property type="term" value="C:kinetochore"/>
    <property type="evidence" value="ECO:0000266"/>
    <property type="project" value="RGD"/>
</dbReference>
<dbReference type="GO" id="GO:0072687">
    <property type="term" value="C:meiotic spindle"/>
    <property type="evidence" value="ECO:0000250"/>
    <property type="project" value="UniProtKB"/>
</dbReference>
<dbReference type="GO" id="GO:0000940">
    <property type="term" value="C:outer kinetochore"/>
    <property type="evidence" value="ECO:0000250"/>
    <property type="project" value="UniProtKB"/>
</dbReference>
<dbReference type="GO" id="GO:0170027">
    <property type="term" value="C:SKA complex"/>
    <property type="evidence" value="ECO:0000266"/>
    <property type="project" value="RGD"/>
</dbReference>
<dbReference type="GO" id="GO:0005876">
    <property type="term" value="C:spindle microtubule"/>
    <property type="evidence" value="ECO:0000266"/>
    <property type="project" value="RGD"/>
</dbReference>
<dbReference type="GO" id="GO:0008017">
    <property type="term" value="F:microtubule binding"/>
    <property type="evidence" value="ECO:0000250"/>
    <property type="project" value="UniProtKB"/>
</dbReference>
<dbReference type="GO" id="GO:0051315">
    <property type="term" value="P:attachment of mitotic spindle microtubules to kinetochore"/>
    <property type="evidence" value="ECO:0000250"/>
    <property type="project" value="UniProtKB"/>
</dbReference>
<dbReference type="GO" id="GO:0051301">
    <property type="term" value="P:cell division"/>
    <property type="evidence" value="ECO:0007669"/>
    <property type="project" value="UniProtKB-KW"/>
</dbReference>
<dbReference type="GO" id="GO:0007059">
    <property type="term" value="P:chromosome segregation"/>
    <property type="evidence" value="ECO:0000318"/>
    <property type="project" value="GO_Central"/>
</dbReference>
<dbReference type="GO" id="GO:0051296">
    <property type="term" value="P:establishment of meiotic spindle orientation"/>
    <property type="evidence" value="ECO:0000250"/>
    <property type="project" value="UniProtKB"/>
</dbReference>
<dbReference type="GO" id="GO:0000278">
    <property type="term" value="P:mitotic cell cycle"/>
    <property type="evidence" value="ECO:0000318"/>
    <property type="project" value="GO_Central"/>
</dbReference>
<dbReference type="GO" id="GO:0007080">
    <property type="term" value="P:mitotic metaphase chromosome alignment"/>
    <property type="evidence" value="ECO:0000250"/>
    <property type="project" value="UniProtKB"/>
</dbReference>
<dbReference type="GO" id="GO:0000070">
    <property type="term" value="P:mitotic sister chromatid segregation"/>
    <property type="evidence" value="ECO:0000250"/>
    <property type="project" value="UniProtKB"/>
</dbReference>
<dbReference type="GO" id="GO:0031110">
    <property type="term" value="P:regulation of microtubule polymerization or depolymerization"/>
    <property type="evidence" value="ECO:0000250"/>
    <property type="project" value="UniProtKB"/>
</dbReference>
<dbReference type="GO" id="GO:0007056">
    <property type="term" value="P:spindle assembly involved in female meiosis"/>
    <property type="evidence" value="ECO:0000250"/>
    <property type="project" value="UniProtKB"/>
</dbReference>
<dbReference type="Gene3D" id="6.10.250.1380">
    <property type="match status" value="1"/>
</dbReference>
<dbReference type="InterPro" id="IPR026762">
    <property type="entry name" value="Ska2"/>
</dbReference>
<dbReference type="InterPro" id="IPR042091">
    <property type="entry name" value="Ska2_N"/>
</dbReference>
<dbReference type="PANTHER" id="PTHR32017">
    <property type="entry name" value="SPINDLE AND KINETOCHORE-ASSOCIATED PROTEIN 2"/>
    <property type="match status" value="1"/>
</dbReference>
<dbReference type="PANTHER" id="PTHR32017:SF3">
    <property type="entry name" value="SPINDLE AND KINETOCHORE-ASSOCIATED PROTEIN 2"/>
    <property type="match status" value="1"/>
</dbReference>
<dbReference type="Pfam" id="PF16740">
    <property type="entry name" value="SKA2"/>
    <property type="match status" value="1"/>
</dbReference>